<protein>
    <recommendedName>
        <fullName evidence="1">Structure-specific endonuclease subunit SLX1</fullName>
        <ecNumber evidence="1">3.1.-.-</ecNumber>
    </recommendedName>
</protein>
<proteinExistence type="evidence at protein level"/>
<comment type="function">
    <text evidence="1">Catalytic subunit of the SLX1-SLX4 structure-specific endonuclease that resolves DNA secondary structures generated during DNA repair and recombination. Has endonuclease activity towards branched DNA substrates, introducing single-strand cuts in duplex DNA close to junctions with ss-DNA.</text>
</comment>
<comment type="cofactor">
    <cofactor evidence="1">
        <name>a divalent metal cation</name>
        <dbReference type="ChEBI" id="CHEBI:60240"/>
    </cofactor>
</comment>
<comment type="subunit">
    <text evidence="1">Forms a heterodimer with SLX4.</text>
</comment>
<comment type="subcellular location">
    <subcellularLocation>
        <location evidence="1">Nucleus</location>
    </subcellularLocation>
</comment>
<comment type="similarity">
    <text evidence="1">Belongs to the SLX1 family.</text>
</comment>
<keyword id="KW-0002">3D-structure</keyword>
<keyword id="KW-0227">DNA damage</keyword>
<keyword id="KW-0233">DNA recombination</keyword>
<keyword id="KW-0234">DNA repair</keyword>
<keyword id="KW-0255">Endonuclease</keyword>
<keyword id="KW-0378">Hydrolase</keyword>
<keyword id="KW-0479">Metal-binding</keyword>
<keyword id="KW-0540">Nuclease</keyword>
<keyword id="KW-0539">Nucleus</keyword>
<keyword id="KW-1185">Reference proteome</keyword>
<keyword id="KW-0862">Zinc</keyword>
<keyword id="KW-0863">Zinc-finger</keyword>
<name>SLX1_CANGA</name>
<feature type="chain" id="PRO_0000383780" description="Structure-specific endonuclease subunit SLX1">
    <location>
        <begin position="1"/>
        <end position="312"/>
    </location>
</feature>
<feature type="domain" description="GIY-YIG" evidence="1">
    <location>
        <begin position="9"/>
        <end position="92"/>
    </location>
</feature>
<feature type="zinc finger region" description="SLX1-type" evidence="1">
    <location>
        <begin position="219"/>
        <end position="282"/>
    </location>
</feature>
<feature type="strand" evidence="2">
    <location>
        <begin position="12"/>
        <end position="21"/>
    </location>
</feature>
<feature type="strand" evidence="2">
    <location>
        <begin position="25"/>
        <end position="31"/>
    </location>
</feature>
<feature type="helix" evidence="2">
    <location>
        <begin position="33"/>
        <end position="41"/>
    </location>
</feature>
<feature type="strand" evidence="2">
    <location>
        <begin position="59"/>
        <end position="67"/>
    </location>
</feature>
<feature type="helix" evidence="2">
    <location>
        <begin position="72"/>
        <end position="84"/>
    </location>
</feature>
<feature type="strand" evidence="3">
    <location>
        <begin position="86"/>
        <end position="88"/>
    </location>
</feature>
<feature type="strand" evidence="3">
    <location>
        <begin position="99"/>
        <end position="102"/>
    </location>
</feature>
<feature type="helix" evidence="2">
    <location>
        <begin position="107"/>
        <end position="118"/>
    </location>
</feature>
<feature type="helix" evidence="2">
    <location>
        <begin position="121"/>
        <end position="124"/>
    </location>
</feature>
<feature type="strand" evidence="2">
    <location>
        <begin position="129"/>
        <end position="134"/>
    </location>
</feature>
<feature type="helix" evidence="2">
    <location>
        <begin position="135"/>
        <end position="143"/>
    </location>
</feature>
<feature type="strand" evidence="2">
    <location>
        <begin position="160"/>
        <end position="168"/>
    </location>
</feature>
<feature type="helix" evidence="2">
    <location>
        <begin position="176"/>
        <end position="213"/>
    </location>
</feature>
<feature type="turn" evidence="2">
    <location>
        <begin position="220"/>
        <end position="222"/>
    </location>
</feature>
<feature type="helix" evidence="2">
    <location>
        <begin position="234"/>
        <end position="237"/>
    </location>
</feature>
<feature type="strand" evidence="2">
    <location>
        <begin position="239"/>
        <end position="241"/>
    </location>
</feature>
<feature type="strand" evidence="2">
    <location>
        <begin position="250"/>
        <end position="252"/>
    </location>
</feature>
<feature type="helix" evidence="2">
    <location>
        <begin position="253"/>
        <end position="260"/>
    </location>
</feature>
<feature type="strand" evidence="3">
    <location>
        <begin position="271"/>
        <end position="273"/>
    </location>
</feature>
<feature type="turn" evidence="2">
    <location>
        <begin position="280"/>
        <end position="282"/>
    </location>
</feature>
<feature type="helix" evidence="2">
    <location>
        <begin position="288"/>
        <end position="299"/>
    </location>
</feature>
<reference key="1">
    <citation type="journal article" date="2004" name="Nature">
        <title>Genome evolution in yeasts.</title>
        <authorList>
            <person name="Dujon B."/>
            <person name="Sherman D."/>
            <person name="Fischer G."/>
            <person name="Durrens P."/>
            <person name="Casaregola S."/>
            <person name="Lafontaine I."/>
            <person name="de Montigny J."/>
            <person name="Marck C."/>
            <person name="Neuveglise C."/>
            <person name="Talla E."/>
            <person name="Goffard N."/>
            <person name="Frangeul L."/>
            <person name="Aigle M."/>
            <person name="Anthouard V."/>
            <person name="Babour A."/>
            <person name="Barbe V."/>
            <person name="Barnay S."/>
            <person name="Blanchin S."/>
            <person name="Beckerich J.-M."/>
            <person name="Beyne E."/>
            <person name="Bleykasten C."/>
            <person name="Boisrame A."/>
            <person name="Boyer J."/>
            <person name="Cattolico L."/>
            <person name="Confanioleri F."/>
            <person name="de Daruvar A."/>
            <person name="Despons L."/>
            <person name="Fabre E."/>
            <person name="Fairhead C."/>
            <person name="Ferry-Dumazet H."/>
            <person name="Groppi A."/>
            <person name="Hantraye F."/>
            <person name="Hennequin C."/>
            <person name="Jauniaux N."/>
            <person name="Joyet P."/>
            <person name="Kachouri R."/>
            <person name="Kerrest A."/>
            <person name="Koszul R."/>
            <person name="Lemaire M."/>
            <person name="Lesur I."/>
            <person name="Ma L."/>
            <person name="Muller H."/>
            <person name="Nicaud J.-M."/>
            <person name="Nikolski M."/>
            <person name="Oztas S."/>
            <person name="Ozier-Kalogeropoulos O."/>
            <person name="Pellenz S."/>
            <person name="Potier S."/>
            <person name="Richard G.-F."/>
            <person name="Straub M.-L."/>
            <person name="Suleau A."/>
            <person name="Swennen D."/>
            <person name="Tekaia F."/>
            <person name="Wesolowski-Louvel M."/>
            <person name="Westhof E."/>
            <person name="Wirth B."/>
            <person name="Zeniou-Meyer M."/>
            <person name="Zivanovic Y."/>
            <person name="Bolotin-Fukuhara M."/>
            <person name="Thierry A."/>
            <person name="Bouchier C."/>
            <person name="Caudron B."/>
            <person name="Scarpelli C."/>
            <person name="Gaillardin C."/>
            <person name="Weissenbach J."/>
            <person name="Wincker P."/>
            <person name="Souciet J.-L."/>
        </authorList>
    </citation>
    <scope>NUCLEOTIDE SEQUENCE [LARGE SCALE GENOMIC DNA]</scope>
    <source>
        <strain>ATCC 2001 / BCRC 20586 / JCM 3761 / NBRC 0622 / NRRL Y-65 / CBS 138</strain>
    </source>
</reference>
<accession>Q6FML9</accession>
<sequence>MEEFQQIPDFYGCYLLQSISKRQSFYIGSTPNPVRRLRQHNGSLSRGGAYRTKRDGTRPWEMVAIVYGFPSRIAALQFEHAWQHGYQTRYIKSQDRVVKTRKGGRSIHHKLAMITSLLKNEYFRYMDLTLHFFNQKVEEIWKNDKFNVSQTQESIDNNYTVSLSQDALTEINNDTIDDIMDVNEKNMELVQNLYSTTLAEKTKTLLLYKEKIDTGINTCQFCNKIIKHNLSGNISENLFAFCRDTSCTFVSHLACAYRYFMSNTELPKEDTIIPQSPKCPKCYTLLKWCDVIYYSIKLNKDNTTADDKKKTI</sequence>
<gene>
    <name evidence="1" type="primary">SLX1</name>
    <name type="ordered locus">CAGL0K06941g</name>
</gene>
<dbReference type="EC" id="3.1.-.-" evidence="1"/>
<dbReference type="EMBL" id="CR380957">
    <property type="protein sequence ID" value="CAG61486.1"/>
    <property type="molecule type" value="Genomic_DNA"/>
</dbReference>
<dbReference type="RefSeq" id="XP_448525.1">
    <property type="nucleotide sequence ID" value="XM_448525.1"/>
</dbReference>
<dbReference type="PDB" id="4XLG">
    <property type="method" value="X-ray"/>
    <property type="resolution" value="1.78 A"/>
    <property type="chains" value="A=1-312"/>
</dbReference>
<dbReference type="PDB" id="4XM5">
    <property type="method" value="X-ray"/>
    <property type="resolution" value="2.34 A"/>
    <property type="chains" value="A=1-312"/>
</dbReference>
<dbReference type="PDBsum" id="4XLG"/>
<dbReference type="PDBsum" id="4XM5"/>
<dbReference type="SMR" id="Q6FML9"/>
<dbReference type="FunCoup" id="Q6FML9">
    <property type="interactions" value="436"/>
</dbReference>
<dbReference type="STRING" id="284593.Q6FML9"/>
<dbReference type="EnsemblFungi" id="CAGL0K06941g-T">
    <property type="protein sequence ID" value="CAGL0K06941g-T-p1"/>
    <property type="gene ID" value="CAGL0K06941g"/>
</dbReference>
<dbReference type="KEGG" id="cgr:2890413"/>
<dbReference type="CGD" id="CAL0134685">
    <property type="gene designation" value="CAGL0K06941g"/>
</dbReference>
<dbReference type="VEuPathDB" id="FungiDB:CAGL0K06941g"/>
<dbReference type="eggNOG" id="KOG3005">
    <property type="taxonomic scope" value="Eukaryota"/>
</dbReference>
<dbReference type="HOGENOM" id="CLU_030739_1_1_1"/>
<dbReference type="InParanoid" id="Q6FML9"/>
<dbReference type="OMA" id="HNRGCDF"/>
<dbReference type="EvolutionaryTrace" id="Q6FML9"/>
<dbReference type="Proteomes" id="UP000002428">
    <property type="component" value="Chromosome K"/>
</dbReference>
<dbReference type="GO" id="GO:0033557">
    <property type="term" value="C:Slx1-Slx4 complex"/>
    <property type="evidence" value="ECO:0007669"/>
    <property type="project" value="UniProtKB-UniRule"/>
</dbReference>
<dbReference type="GO" id="GO:0017108">
    <property type="term" value="F:5'-flap endonuclease activity"/>
    <property type="evidence" value="ECO:0007669"/>
    <property type="project" value="EnsemblFungi"/>
</dbReference>
<dbReference type="GO" id="GO:0008821">
    <property type="term" value="F:crossover junction DNA endonuclease activity"/>
    <property type="evidence" value="ECO:0007669"/>
    <property type="project" value="TreeGrafter"/>
</dbReference>
<dbReference type="GO" id="GO:0008270">
    <property type="term" value="F:zinc ion binding"/>
    <property type="evidence" value="ECO:0007669"/>
    <property type="project" value="UniProtKB-KW"/>
</dbReference>
<dbReference type="GO" id="GO:0006261">
    <property type="term" value="P:DNA-templated DNA replication"/>
    <property type="evidence" value="ECO:0007669"/>
    <property type="project" value="EnsemblFungi"/>
</dbReference>
<dbReference type="GO" id="GO:0000724">
    <property type="term" value="P:double-strand break repair via homologous recombination"/>
    <property type="evidence" value="ECO:0007669"/>
    <property type="project" value="TreeGrafter"/>
</dbReference>
<dbReference type="CDD" id="cd10455">
    <property type="entry name" value="GIY-YIG_SLX1"/>
    <property type="match status" value="1"/>
</dbReference>
<dbReference type="FunFam" id="3.40.1440.10:FF:000006">
    <property type="entry name" value="Structure-specific endonuclease subunit SLX1"/>
    <property type="match status" value="1"/>
</dbReference>
<dbReference type="Gene3D" id="3.40.1440.10">
    <property type="entry name" value="GIY-YIG endonuclease"/>
    <property type="match status" value="1"/>
</dbReference>
<dbReference type="Gene3D" id="3.30.40.10">
    <property type="entry name" value="Zinc/RING finger domain, C3HC4 (zinc finger)"/>
    <property type="match status" value="1"/>
</dbReference>
<dbReference type="HAMAP" id="MF_03100">
    <property type="entry name" value="Endonuc_su_Slx1"/>
    <property type="match status" value="1"/>
</dbReference>
<dbReference type="InterPro" id="IPR000305">
    <property type="entry name" value="GIY-YIG_endonuc"/>
</dbReference>
<dbReference type="InterPro" id="IPR035901">
    <property type="entry name" value="GIY-YIG_endonuc_sf"/>
</dbReference>
<dbReference type="InterPro" id="IPR027520">
    <property type="entry name" value="Slx1"/>
</dbReference>
<dbReference type="InterPro" id="IPR048749">
    <property type="entry name" value="SLX1_C"/>
</dbReference>
<dbReference type="InterPro" id="IPR050381">
    <property type="entry name" value="SLX1_endonuclease"/>
</dbReference>
<dbReference type="InterPro" id="IPR013083">
    <property type="entry name" value="Znf_RING/FYVE/PHD"/>
</dbReference>
<dbReference type="PANTHER" id="PTHR20208">
    <property type="entry name" value="STRUCTURE-SPECIFIC ENDONUCLEASE SUBUNIT SLX1"/>
    <property type="match status" value="1"/>
</dbReference>
<dbReference type="PANTHER" id="PTHR20208:SF10">
    <property type="entry name" value="STRUCTURE-SPECIFIC ENDONUCLEASE SUBUNIT SLX1"/>
    <property type="match status" value="1"/>
</dbReference>
<dbReference type="Pfam" id="PF01541">
    <property type="entry name" value="GIY-YIG"/>
    <property type="match status" value="1"/>
</dbReference>
<dbReference type="Pfam" id="PF21202">
    <property type="entry name" value="SLX1_C"/>
    <property type="match status" value="1"/>
</dbReference>
<dbReference type="SMART" id="SM00465">
    <property type="entry name" value="GIYc"/>
    <property type="match status" value="1"/>
</dbReference>
<dbReference type="SUPFAM" id="SSF82771">
    <property type="entry name" value="GIY-YIG endonuclease"/>
    <property type="match status" value="1"/>
</dbReference>
<dbReference type="PROSITE" id="PS50164">
    <property type="entry name" value="GIY_YIG"/>
    <property type="match status" value="1"/>
</dbReference>
<organism>
    <name type="scientific">Candida glabrata (strain ATCC 2001 / BCRC 20586 / JCM 3761 / NBRC 0622 / NRRL Y-65 / CBS 138)</name>
    <name type="common">Yeast</name>
    <name type="synonym">Nakaseomyces glabratus</name>
    <dbReference type="NCBI Taxonomy" id="284593"/>
    <lineage>
        <taxon>Eukaryota</taxon>
        <taxon>Fungi</taxon>
        <taxon>Dikarya</taxon>
        <taxon>Ascomycota</taxon>
        <taxon>Saccharomycotina</taxon>
        <taxon>Saccharomycetes</taxon>
        <taxon>Saccharomycetales</taxon>
        <taxon>Saccharomycetaceae</taxon>
        <taxon>Nakaseomyces</taxon>
    </lineage>
</organism>
<evidence type="ECO:0000255" key="1">
    <source>
        <dbReference type="HAMAP-Rule" id="MF_03100"/>
    </source>
</evidence>
<evidence type="ECO:0007829" key="2">
    <source>
        <dbReference type="PDB" id="4XLG"/>
    </source>
</evidence>
<evidence type="ECO:0007829" key="3">
    <source>
        <dbReference type="PDB" id="4XM5"/>
    </source>
</evidence>